<reference key="1">
    <citation type="journal article" date="2003" name="FASEB J.">
        <title>Identification of two additional members of the membrane-bound dipeptidase family.</title>
        <authorList>
            <person name="Habib G.M."/>
            <person name="Shi Z.-Z."/>
            <person name="Cuevas A.A."/>
            <person name="Lieberman M.W."/>
        </authorList>
    </citation>
    <scope>NUCLEOTIDE SEQUENCE [MRNA]</scope>
    <scope>SUBCELLULAR LOCATION</scope>
    <scope>PRELIMINARY FUNCTION</scope>
    <scope>CAUTION</scope>
    <source>
        <strain>L129</strain>
        <tissue>Spleen</tissue>
        <tissue>Testis</tissue>
    </source>
</reference>
<reference key="2">
    <citation type="journal article" date="2005" name="Science">
        <title>The transcriptional landscape of the mammalian genome.</title>
        <authorList>
            <person name="Carninci P."/>
            <person name="Kasukawa T."/>
            <person name="Katayama S."/>
            <person name="Gough J."/>
            <person name="Frith M.C."/>
            <person name="Maeda N."/>
            <person name="Oyama R."/>
            <person name="Ravasi T."/>
            <person name="Lenhard B."/>
            <person name="Wells C."/>
            <person name="Kodzius R."/>
            <person name="Shimokawa K."/>
            <person name="Bajic V.B."/>
            <person name="Brenner S.E."/>
            <person name="Batalov S."/>
            <person name="Forrest A.R."/>
            <person name="Zavolan M."/>
            <person name="Davis M.J."/>
            <person name="Wilming L.G."/>
            <person name="Aidinis V."/>
            <person name="Allen J.E."/>
            <person name="Ambesi-Impiombato A."/>
            <person name="Apweiler R."/>
            <person name="Aturaliya R.N."/>
            <person name="Bailey T.L."/>
            <person name="Bansal M."/>
            <person name="Baxter L."/>
            <person name="Beisel K.W."/>
            <person name="Bersano T."/>
            <person name="Bono H."/>
            <person name="Chalk A.M."/>
            <person name="Chiu K.P."/>
            <person name="Choudhary V."/>
            <person name="Christoffels A."/>
            <person name="Clutterbuck D.R."/>
            <person name="Crowe M.L."/>
            <person name="Dalla E."/>
            <person name="Dalrymple B.P."/>
            <person name="de Bono B."/>
            <person name="Della Gatta G."/>
            <person name="di Bernardo D."/>
            <person name="Down T."/>
            <person name="Engstrom P."/>
            <person name="Fagiolini M."/>
            <person name="Faulkner G."/>
            <person name="Fletcher C.F."/>
            <person name="Fukushima T."/>
            <person name="Furuno M."/>
            <person name="Futaki S."/>
            <person name="Gariboldi M."/>
            <person name="Georgii-Hemming P."/>
            <person name="Gingeras T.R."/>
            <person name="Gojobori T."/>
            <person name="Green R.E."/>
            <person name="Gustincich S."/>
            <person name="Harbers M."/>
            <person name="Hayashi Y."/>
            <person name="Hensch T.K."/>
            <person name="Hirokawa N."/>
            <person name="Hill D."/>
            <person name="Huminiecki L."/>
            <person name="Iacono M."/>
            <person name="Ikeo K."/>
            <person name="Iwama A."/>
            <person name="Ishikawa T."/>
            <person name="Jakt M."/>
            <person name="Kanapin A."/>
            <person name="Katoh M."/>
            <person name="Kawasawa Y."/>
            <person name="Kelso J."/>
            <person name="Kitamura H."/>
            <person name="Kitano H."/>
            <person name="Kollias G."/>
            <person name="Krishnan S.P."/>
            <person name="Kruger A."/>
            <person name="Kummerfeld S.K."/>
            <person name="Kurochkin I.V."/>
            <person name="Lareau L.F."/>
            <person name="Lazarevic D."/>
            <person name="Lipovich L."/>
            <person name="Liu J."/>
            <person name="Liuni S."/>
            <person name="McWilliam S."/>
            <person name="Madan Babu M."/>
            <person name="Madera M."/>
            <person name="Marchionni L."/>
            <person name="Matsuda H."/>
            <person name="Matsuzawa S."/>
            <person name="Miki H."/>
            <person name="Mignone F."/>
            <person name="Miyake S."/>
            <person name="Morris K."/>
            <person name="Mottagui-Tabar S."/>
            <person name="Mulder N."/>
            <person name="Nakano N."/>
            <person name="Nakauchi H."/>
            <person name="Ng P."/>
            <person name="Nilsson R."/>
            <person name="Nishiguchi S."/>
            <person name="Nishikawa S."/>
            <person name="Nori F."/>
            <person name="Ohara O."/>
            <person name="Okazaki Y."/>
            <person name="Orlando V."/>
            <person name="Pang K.C."/>
            <person name="Pavan W.J."/>
            <person name="Pavesi G."/>
            <person name="Pesole G."/>
            <person name="Petrovsky N."/>
            <person name="Piazza S."/>
            <person name="Reed J."/>
            <person name="Reid J.F."/>
            <person name="Ring B.Z."/>
            <person name="Ringwald M."/>
            <person name="Rost B."/>
            <person name="Ruan Y."/>
            <person name="Salzberg S.L."/>
            <person name="Sandelin A."/>
            <person name="Schneider C."/>
            <person name="Schoenbach C."/>
            <person name="Sekiguchi K."/>
            <person name="Semple C.A."/>
            <person name="Seno S."/>
            <person name="Sessa L."/>
            <person name="Sheng Y."/>
            <person name="Shibata Y."/>
            <person name="Shimada H."/>
            <person name="Shimada K."/>
            <person name="Silva D."/>
            <person name="Sinclair B."/>
            <person name="Sperling S."/>
            <person name="Stupka E."/>
            <person name="Sugiura K."/>
            <person name="Sultana R."/>
            <person name="Takenaka Y."/>
            <person name="Taki K."/>
            <person name="Tammoja K."/>
            <person name="Tan S.L."/>
            <person name="Tang S."/>
            <person name="Taylor M.S."/>
            <person name="Tegner J."/>
            <person name="Teichmann S.A."/>
            <person name="Ueda H.R."/>
            <person name="van Nimwegen E."/>
            <person name="Verardo R."/>
            <person name="Wei C.L."/>
            <person name="Yagi K."/>
            <person name="Yamanishi H."/>
            <person name="Zabarovsky E."/>
            <person name="Zhu S."/>
            <person name="Zimmer A."/>
            <person name="Hide W."/>
            <person name="Bult C."/>
            <person name="Grimmond S.M."/>
            <person name="Teasdale R.D."/>
            <person name="Liu E.T."/>
            <person name="Brusic V."/>
            <person name="Quackenbush J."/>
            <person name="Wahlestedt C."/>
            <person name="Mattick J.S."/>
            <person name="Hume D.A."/>
            <person name="Kai C."/>
            <person name="Sasaki D."/>
            <person name="Tomaru Y."/>
            <person name="Fukuda S."/>
            <person name="Kanamori-Katayama M."/>
            <person name="Suzuki M."/>
            <person name="Aoki J."/>
            <person name="Arakawa T."/>
            <person name="Iida J."/>
            <person name="Imamura K."/>
            <person name="Itoh M."/>
            <person name="Kato T."/>
            <person name="Kawaji H."/>
            <person name="Kawagashira N."/>
            <person name="Kawashima T."/>
            <person name="Kojima M."/>
            <person name="Kondo S."/>
            <person name="Konno H."/>
            <person name="Nakano K."/>
            <person name="Ninomiya N."/>
            <person name="Nishio T."/>
            <person name="Okada M."/>
            <person name="Plessy C."/>
            <person name="Shibata K."/>
            <person name="Shiraki T."/>
            <person name="Suzuki S."/>
            <person name="Tagami M."/>
            <person name="Waki K."/>
            <person name="Watahiki A."/>
            <person name="Okamura-Oho Y."/>
            <person name="Suzuki H."/>
            <person name="Kawai J."/>
            <person name="Hayashizaki Y."/>
        </authorList>
    </citation>
    <scope>NUCLEOTIDE SEQUENCE [LARGE SCALE MRNA]</scope>
    <source>
        <strain>C57BL/6J</strain>
        <tissue>Testis</tissue>
    </source>
</reference>
<reference key="3">
    <citation type="journal article" date="2004" name="Genome Res.">
        <title>The status, quality, and expansion of the NIH full-length cDNA project: the Mammalian Gene Collection (MGC).</title>
        <authorList>
            <consortium name="The MGC Project Team"/>
        </authorList>
    </citation>
    <scope>NUCLEOTIDE SEQUENCE [LARGE SCALE MRNA]</scope>
    <source>
        <tissue>Testis</tissue>
    </source>
</reference>
<reference key="4">
    <citation type="journal article" date="2010" name="Cell">
        <title>A tissue-specific atlas of mouse protein phosphorylation and expression.</title>
        <authorList>
            <person name="Huttlin E.L."/>
            <person name="Jedrychowski M.P."/>
            <person name="Elias J.E."/>
            <person name="Goswami T."/>
            <person name="Rad R."/>
            <person name="Beausoleil S.A."/>
            <person name="Villen J."/>
            <person name="Haas W."/>
            <person name="Sowa M.E."/>
            <person name="Gygi S.P."/>
        </authorList>
    </citation>
    <scope>IDENTIFICATION BY MASS SPECTROMETRY [LARGE SCALE ANALYSIS]</scope>
    <source>
        <tissue>Testis</tissue>
    </source>
</reference>
<reference key="5">
    <citation type="journal article" date="2010" name="J. Hum. Genet.">
        <title>Screening of genes involved in chromosome segregation during meiosis I: toward the identification of genes responsible for infertility in humans.</title>
        <authorList>
            <person name="Kogo H."/>
            <person name="Kowa-Sugiyama H."/>
            <person name="Yamada K."/>
            <person name="Bolor H."/>
            <person name="Tsutsumi M."/>
            <person name="Ohye T."/>
            <person name="Inagaki H."/>
            <person name="Taniguchi M."/>
            <person name="Toda T."/>
            <person name="Kurahashi H."/>
        </authorList>
    </citation>
    <scope>TISSUE SPECIFICITY</scope>
    <scope>DEVELOPMENTAL STAGE</scope>
</reference>
<reference key="6">
    <citation type="journal article" date="2011" name="J. Reprod. Immunol.">
        <title>Molecular characterization and expression of dipeptidase 3, a testis-specific membrane-bound dipeptidase: complex formation with TEX101, a germ-cell-specific antigen in the mouse testis.</title>
        <authorList>
            <person name="Yoshitake H."/>
            <person name="Yanagida M."/>
            <person name="Maruyama M."/>
            <person name="Takamori K."/>
            <person name="Hasegawa A."/>
            <person name="Araki Y."/>
        </authorList>
    </citation>
    <scope>INTERACTION WITH TEX101</scope>
</reference>
<reference key="7">
    <citation type="journal article" date="2019" name="Gene">
        <title>The testis-specifically expressed Dpep3 is not essential for male fertility in mice.</title>
        <authorList>
            <person name="Xie Y."/>
            <person name="Khan R."/>
            <person name="Wahab F."/>
            <person name="Hussain H.M.J."/>
            <person name="Ali A."/>
            <person name="Ma H."/>
            <person name="Jiang H."/>
            <person name="Xu J."/>
            <person name="Zaman Q."/>
            <person name="Khan M."/>
            <person name="Jiang X."/>
            <person name="Shi Q."/>
        </authorList>
    </citation>
    <scope>DISRUPTION PHENOTYPE</scope>
</reference>
<reference key="8">
    <citation type="journal article" date="2020" name="J. Struct. Biol.">
        <title>Structure of human DPEP3 in complex with the SC-003 antibody Fab fragment reveals basis for lack of dipeptidase activity.</title>
        <authorList>
            <person name="Hayashi K."/>
            <person name="Longenecker K.L."/>
            <person name="Koenig P."/>
            <person name="Prashar A."/>
            <person name="Hampl J."/>
            <person name="Stoll V."/>
            <person name="Vivona S."/>
        </authorList>
    </citation>
    <scope>ABSENCE OF DIPEPTIDASE ACTIVITY</scope>
    <scope>CAUTION</scope>
</reference>
<protein>
    <recommendedName>
        <fullName>Dipeptidase 3</fullName>
    </recommendedName>
    <alternativeName>
        <fullName evidence="11">Membrane-bound dipeptidase 3</fullName>
        <shortName evidence="11">MBD-3</shortName>
    </alternativeName>
    <alternativeName>
        <fullName>Protein expressed in male leptotene and zygotene spermatocytes 136</fullName>
        <shortName>MLZ-136</shortName>
    </alternativeName>
</protein>
<gene>
    <name type="primary">Dpep3</name>
    <name type="synonym">Mbd3</name>
</gene>
<feature type="signal peptide" evidence="3">
    <location>
        <begin position="1"/>
        <end position="35"/>
    </location>
</feature>
<feature type="chain" id="PRO_0000231613" description="Dipeptidase 3">
    <location>
        <begin position="36"/>
        <end position="462"/>
    </location>
</feature>
<feature type="propeptide" id="PRO_0000231614" description="Removed in mature form" evidence="1">
    <location>
        <begin position="463"/>
        <end position="493"/>
    </location>
</feature>
<feature type="region of interest" description="Disordered" evidence="5">
    <location>
        <begin position="41"/>
        <end position="74"/>
    </location>
</feature>
<feature type="compositionally biased region" description="Low complexity" evidence="5">
    <location>
        <begin position="41"/>
        <end position="60"/>
    </location>
</feature>
<feature type="lipid moiety-binding region" description="GPI-anchor amidated serine" evidence="3">
    <location>
        <position position="462"/>
    </location>
</feature>
<feature type="glycosylation site" description="N-linked (GlcNAc...) asparagine" evidence="3">
    <location>
        <position position="331"/>
    </location>
</feature>
<feature type="disulfide bond" evidence="4">
    <location>
        <begin position="143"/>
        <end position="222"/>
    </location>
</feature>
<feature type="disulfide bond" evidence="4">
    <location>
        <begin position="294"/>
        <end position="326"/>
    </location>
</feature>
<feature type="disulfide bond" description="Interchain" evidence="4">
    <location>
        <position position="431"/>
    </location>
</feature>
<name>DPEP3_MOUSE</name>
<keyword id="KW-1015">Disulfide bond</keyword>
<keyword id="KW-0325">Glycoprotein</keyword>
<keyword id="KW-0336">GPI-anchor</keyword>
<keyword id="KW-0449">Lipoprotein</keyword>
<keyword id="KW-0472">Membrane</keyword>
<keyword id="KW-1185">Reference proteome</keyword>
<keyword id="KW-0732">Signal</keyword>
<evidence type="ECO:0000250" key="1">
    <source>
        <dbReference type="UniProtKB" id="P16444"/>
    </source>
</evidence>
<evidence type="ECO:0000250" key="2">
    <source>
        <dbReference type="UniProtKB" id="Q9H4B8"/>
    </source>
</evidence>
<evidence type="ECO:0000255" key="3"/>
<evidence type="ECO:0000255" key="4">
    <source>
        <dbReference type="PROSITE-ProRule" id="PRU10073"/>
    </source>
</evidence>
<evidence type="ECO:0000256" key="5">
    <source>
        <dbReference type="SAM" id="MobiDB-lite"/>
    </source>
</evidence>
<evidence type="ECO:0000269" key="6">
    <source>
    </source>
</evidence>
<evidence type="ECO:0000269" key="7">
    <source>
    </source>
</evidence>
<evidence type="ECO:0000269" key="8">
    <source>
    </source>
</evidence>
<evidence type="ECO:0000269" key="9">
    <source>
    </source>
</evidence>
<evidence type="ECO:0000269" key="10">
    <source>
    </source>
</evidence>
<evidence type="ECO:0000303" key="11">
    <source>
    </source>
</evidence>
<organism>
    <name type="scientific">Mus musculus</name>
    <name type="common">Mouse</name>
    <dbReference type="NCBI Taxonomy" id="10090"/>
    <lineage>
        <taxon>Eukaryota</taxon>
        <taxon>Metazoa</taxon>
        <taxon>Chordata</taxon>
        <taxon>Craniata</taxon>
        <taxon>Vertebrata</taxon>
        <taxon>Euteleostomi</taxon>
        <taxon>Mammalia</taxon>
        <taxon>Eutheria</taxon>
        <taxon>Euarchontoglires</taxon>
        <taxon>Glires</taxon>
        <taxon>Rodentia</taxon>
        <taxon>Myomorpha</taxon>
        <taxon>Muroidea</taxon>
        <taxon>Muridae</taxon>
        <taxon>Murinae</taxon>
        <taxon>Mus</taxon>
        <taxon>Mus</taxon>
    </lineage>
</organism>
<accession>Q9DA79</accession>
<proteinExistence type="evidence at protein level"/>
<comment type="function">
    <text evidence="2 6 10">Lacks dipeptidase activity and is unable to hydrolyze cystinyl-bis-glycine (PubMed:32325220). The absence of activity may be due to the inability of serine (instead of aspartate found in DPEP1/2) at position 356 to function as the acid/base catalyst and activate the nucleophilic water/hydroxide (PubMed:32325220). Does not hydrolyze leukotriene D4 (LTD4) into leukotriene E4 (LTE4) (PubMed:12738806). Does not hydrolyze the beta-lactam antibiotic imipenem (By similarity).</text>
</comment>
<comment type="subunit">
    <text evidence="4 8">Homodimer; disulfide-linked (By similarity). Interacts with TEX101; co-localized on the cell surface of spermatocytes, spermatids, and testicular spermatozoa, co-localized only in cytoplasmic droplets of caput and corpus epididymal sperm (PubMed:21724266).</text>
</comment>
<comment type="subcellular location">
    <subcellularLocation>
        <location evidence="6">Membrane</location>
        <topology evidence="6">Lipid-anchor</topology>
        <topology evidence="6">GPI-anchor</topology>
    </subcellularLocation>
</comment>
<comment type="tissue specificity">
    <text evidence="6 7">Expressed in testis but not ovary.</text>
</comment>
<comment type="developmental stage">
    <text evidence="7">Expressed in ovary and testis at 15.5 dpc.</text>
</comment>
<comment type="disruption phenotype">
    <text evidence="9">No visible phenotype. Mice are fertile despite a significant reduction in sperm count.</text>
</comment>
<comment type="similarity">
    <text evidence="4">Belongs to the metallo-dependent hydrolases superfamily. Peptidase M19 family.</text>
</comment>
<comment type="caution">
    <text evidence="6 10">According to PubMed:12738806, exhibits dipeptidase activity hydrolyzing cystinyl-bis-glycine but according to PubMed:32325220, lacks this activity which may be due to the inability of serine (instead of aspartate found in DPEP1/2) at position 356 to function as the acid/base catalyst and activate the nucleophilic water/hydroxide.</text>
</comment>
<dbReference type="EMBL" id="AF488553">
    <property type="protein sequence ID" value="AAP84987.1"/>
    <property type="molecule type" value="mRNA"/>
</dbReference>
<dbReference type="EMBL" id="AK006085">
    <property type="protein sequence ID" value="BAB24402.1"/>
    <property type="molecule type" value="mRNA"/>
</dbReference>
<dbReference type="EMBL" id="BC051148">
    <property type="protein sequence ID" value="AAH51148.1"/>
    <property type="molecule type" value="mRNA"/>
</dbReference>
<dbReference type="CCDS" id="CCDS22624.1"/>
<dbReference type="RefSeq" id="NP_082236.1">
    <property type="nucleotide sequence ID" value="NM_027960.2"/>
</dbReference>
<dbReference type="SMR" id="Q9DA79"/>
<dbReference type="BioGRID" id="214981">
    <property type="interactions" value="1"/>
</dbReference>
<dbReference type="FunCoup" id="Q9DA79">
    <property type="interactions" value="64"/>
</dbReference>
<dbReference type="IntAct" id="Q9DA79">
    <property type="interactions" value="1"/>
</dbReference>
<dbReference type="MINT" id="Q9DA79"/>
<dbReference type="STRING" id="10090.ENSMUSP00000034371"/>
<dbReference type="MEROPS" id="M19.011"/>
<dbReference type="GlyCosmos" id="Q9DA79">
    <property type="glycosylation" value="1 site, No reported glycans"/>
</dbReference>
<dbReference type="GlyGen" id="Q9DA79">
    <property type="glycosylation" value="1 site"/>
</dbReference>
<dbReference type="iPTMnet" id="Q9DA79"/>
<dbReference type="PhosphoSitePlus" id="Q9DA79"/>
<dbReference type="SwissPalm" id="Q9DA79"/>
<dbReference type="jPOST" id="Q9DA79"/>
<dbReference type="PaxDb" id="10090-ENSMUSP00000034371"/>
<dbReference type="PeptideAtlas" id="Q9DA79"/>
<dbReference type="ProteomicsDB" id="279802"/>
<dbReference type="Antibodypedia" id="54982">
    <property type="antibodies" value="106 antibodies from 18 providers"/>
</dbReference>
<dbReference type="DNASU" id="71854"/>
<dbReference type="Ensembl" id="ENSMUST00000034371.9">
    <property type="protein sequence ID" value="ENSMUSP00000034371.8"/>
    <property type="gene ID" value="ENSMUSG00000031898.10"/>
</dbReference>
<dbReference type="GeneID" id="71854"/>
<dbReference type="KEGG" id="mmu:71854"/>
<dbReference type="UCSC" id="uc009net.1">
    <property type="organism name" value="mouse"/>
</dbReference>
<dbReference type="AGR" id="MGI:1919104"/>
<dbReference type="CTD" id="64180"/>
<dbReference type="MGI" id="MGI:1919104">
    <property type="gene designation" value="Dpep3"/>
</dbReference>
<dbReference type="VEuPathDB" id="HostDB:ENSMUSG00000031898"/>
<dbReference type="eggNOG" id="KOG4127">
    <property type="taxonomic scope" value="Eukaryota"/>
</dbReference>
<dbReference type="GeneTree" id="ENSGT00940000162331"/>
<dbReference type="HOGENOM" id="CLU_031404_4_1_1"/>
<dbReference type="InParanoid" id="Q9DA79"/>
<dbReference type="OMA" id="SRHNVFG"/>
<dbReference type="OrthoDB" id="445695at2759"/>
<dbReference type="PhylomeDB" id="Q9DA79"/>
<dbReference type="TreeFam" id="TF324523"/>
<dbReference type="BioGRID-ORCS" id="71854">
    <property type="hits" value="1 hit in 81 CRISPR screens"/>
</dbReference>
<dbReference type="ChiTaRS" id="Dpep3">
    <property type="organism name" value="mouse"/>
</dbReference>
<dbReference type="PRO" id="PR:Q9DA79"/>
<dbReference type="Proteomes" id="UP000000589">
    <property type="component" value="Chromosome 8"/>
</dbReference>
<dbReference type="RNAct" id="Q9DA79">
    <property type="molecule type" value="protein"/>
</dbReference>
<dbReference type="Bgee" id="ENSMUSG00000031898">
    <property type="expression patterns" value="Expressed in spermatocyte and 20 other cell types or tissues"/>
</dbReference>
<dbReference type="GO" id="GO:0001669">
    <property type="term" value="C:acrosomal vesicle"/>
    <property type="evidence" value="ECO:0000314"/>
    <property type="project" value="UniProtKB"/>
</dbReference>
<dbReference type="GO" id="GO:0016020">
    <property type="term" value="C:membrane"/>
    <property type="evidence" value="ECO:0000314"/>
    <property type="project" value="UniProtKB"/>
</dbReference>
<dbReference type="GO" id="GO:0005886">
    <property type="term" value="C:plasma membrane"/>
    <property type="evidence" value="ECO:0000314"/>
    <property type="project" value="UniProtKB"/>
</dbReference>
<dbReference type="GO" id="GO:0098552">
    <property type="term" value="C:side of membrane"/>
    <property type="evidence" value="ECO:0007669"/>
    <property type="project" value="UniProtKB-KW"/>
</dbReference>
<dbReference type="GO" id="GO:0016805">
    <property type="term" value="F:dipeptidase activity"/>
    <property type="evidence" value="ECO:0000314"/>
    <property type="project" value="UniProtKB"/>
</dbReference>
<dbReference type="GO" id="GO:0008233">
    <property type="term" value="F:peptidase activity"/>
    <property type="evidence" value="ECO:0000314"/>
    <property type="project" value="MGI"/>
</dbReference>
<dbReference type="GO" id="GO:0006508">
    <property type="term" value="P:proteolysis"/>
    <property type="evidence" value="ECO:0000314"/>
    <property type="project" value="MGI"/>
</dbReference>
<dbReference type="CDD" id="cd01301">
    <property type="entry name" value="rDP_like"/>
    <property type="match status" value="1"/>
</dbReference>
<dbReference type="FunFam" id="3.20.20.140:FF:000030">
    <property type="entry name" value="Dipeptidase"/>
    <property type="match status" value="1"/>
</dbReference>
<dbReference type="Gene3D" id="3.20.20.140">
    <property type="entry name" value="Metal-dependent hydrolases"/>
    <property type="match status" value="1"/>
</dbReference>
<dbReference type="InterPro" id="IPR000180">
    <property type="entry name" value="Dipep_AS"/>
</dbReference>
<dbReference type="InterPro" id="IPR032466">
    <property type="entry name" value="Metal_Hydrolase"/>
</dbReference>
<dbReference type="InterPro" id="IPR008257">
    <property type="entry name" value="Pept_M19"/>
</dbReference>
<dbReference type="PANTHER" id="PTHR10443:SF14">
    <property type="entry name" value="DIPEPTIDASE 3"/>
    <property type="match status" value="1"/>
</dbReference>
<dbReference type="PANTHER" id="PTHR10443">
    <property type="entry name" value="MICROSOMAL DIPEPTIDASE"/>
    <property type="match status" value="1"/>
</dbReference>
<dbReference type="Pfam" id="PF01244">
    <property type="entry name" value="Peptidase_M19"/>
    <property type="match status" value="1"/>
</dbReference>
<dbReference type="SUPFAM" id="SSF51556">
    <property type="entry name" value="Metallo-dependent hydrolases"/>
    <property type="match status" value="1"/>
</dbReference>
<dbReference type="PROSITE" id="PS00869">
    <property type="entry name" value="RENAL_DIPEPTIDASE_1"/>
    <property type="match status" value="1"/>
</dbReference>
<dbReference type="PROSITE" id="PS51365">
    <property type="entry name" value="RENAL_DIPEPTIDASE_2"/>
    <property type="match status" value="1"/>
</dbReference>
<sequence length="493" mass="54247">MQPAGLEGPRALGLRPLGHRLSLLGVLLLVPSLWVTCTLTTPSPSSAPTTPEASNATTAPGIPNDTATSGVTSDPRLREQALALMRDFPLVDGHNDLPLLLRELFQNQLQDVNLRNFTRGQTNLDRLRDGLVGAQFWSAYIPCQTQDRDAVRLALEQIDLIRRMCSAYPELELVTSADGLNNTQKLACLIGVEGGHSLDTSLAVLRSFYELGVRYLTLTFTCSTPWAESATKFRHHFYTNISGLTSFGEKVVEEMNRLGMMIDLSHASDTLVKQTLEVSQAPVIFSHSAARSVCDNLLNIPDDILQLLKKNGGIVMVTLSMGVLQCSLFANVSTVADHFDHIRTVIGSEFIGIGGSYDGSGRFPQGLEDVSTYPVLIEELLSRGWDERELQGVLRGNLLRVFRQVEQVREKSLGQSPVEVKFPERQQSNTCHSHLLPQPQEDQHQDTHLKVTKLPNILQRASKAPPHPLPGLMATLTSLALILWLCCSGHRAV</sequence>